<feature type="chain" id="PRO_0000247554" description="Protein dpy-30 homolog">
    <location>
        <begin position="1"/>
        <end position="99"/>
    </location>
</feature>
<feature type="region of interest" description="Disordered" evidence="3">
    <location>
        <begin position="1"/>
        <end position="26"/>
    </location>
</feature>
<feature type="modified residue" description="N-acetylmethionine" evidence="2">
    <location>
        <position position="1"/>
    </location>
</feature>
<feature type="modified residue" description="Phosphoserine" evidence="2">
    <location>
        <position position="19"/>
    </location>
</feature>
<feature type="modified residue" description="N6-acetyllysine; alternate" evidence="2">
    <location>
        <position position="35"/>
    </location>
</feature>
<feature type="cross-link" description="Glycyl lysine isopeptide (Lys-Gly) (interchain with G-Cter in SUMO2); alternate" evidence="2">
    <location>
        <position position="35"/>
    </location>
</feature>
<proteinExistence type="inferred from homology"/>
<gene>
    <name type="primary">DPY30</name>
</gene>
<organism>
    <name type="scientific">Bos taurus</name>
    <name type="common">Bovine</name>
    <dbReference type="NCBI Taxonomy" id="9913"/>
    <lineage>
        <taxon>Eukaryota</taxon>
        <taxon>Metazoa</taxon>
        <taxon>Chordata</taxon>
        <taxon>Craniata</taxon>
        <taxon>Vertebrata</taxon>
        <taxon>Euteleostomi</taxon>
        <taxon>Mammalia</taxon>
        <taxon>Eutheria</taxon>
        <taxon>Laurasiatheria</taxon>
        <taxon>Artiodactyla</taxon>
        <taxon>Ruminantia</taxon>
        <taxon>Pecora</taxon>
        <taxon>Bovidae</taxon>
        <taxon>Bovinae</taxon>
        <taxon>Bos</taxon>
    </lineage>
</organism>
<protein>
    <recommendedName>
        <fullName>Protein dpy-30 homolog</fullName>
    </recommendedName>
    <alternativeName>
        <fullName>Dpy-30-like protein</fullName>
        <shortName>Dpy-30L</shortName>
    </alternativeName>
</protein>
<evidence type="ECO:0000250" key="1"/>
<evidence type="ECO:0000250" key="2">
    <source>
        <dbReference type="UniProtKB" id="Q9C005"/>
    </source>
</evidence>
<evidence type="ECO:0000256" key="3">
    <source>
        <dbReference type="SAM" id="MobiDB-lite"/>
    </source>
</evidence>
<evidence type="ECO:0000305" key="4"/>
<dbReference type="EMBL" id="BC111634">
    <property type="protein sequence ID" value="AAI11635.1"/>
    <property type="molecule type" value="mRNA"/>
</dbReference>
<dbReference type="RefSeq" id="NP_001071384.1">
    <property type="nucleotide sequence ID" value="NM_001077916.2"/>
</dbReference>
<dbReference type="RefSeq" id="XP_010808171.1">
    <property type="nucleotide sequence ID" value="XM_010809869.3"/>
</dbReference>
<dbReference type="RefSeq" id="XP_059747161.1">
    <property type="nucleotide sequence ID" value="XM_059891178.1"/>
</dbReference>
<dbReference type="RefSeq" id="XP_059747162.1">
    <property type="nucleotide sequence ID" value="XM_059891179.1"/>
</dbReference>
<dbReference type="SMR" id="Q2NKU6"/>
<dbReference type="FunCoup" id="Q2NKU6">
    <property type="interactions" value="1760"/>
</dbReference>
<dbReference type="STRING" id="9913.ENSBTAP00000012183"/>
<dbReference type="PaxDb" id="9913-ENSBTAP00000012183"/>
<dbReference type="Ensembl" id="ENSBTAT00000012183.5">
    <property type="protein sequence ID" value="ENSBTAP00000012183.3"/>
    <property type="gene ID" value="ENSBTAG00000009246.5"/>
</dbReference>
<dbReference type="GeneID" id="513162"/>
<dbReference type="KEGG" id="bta:513162"/>
<dbReference type="CTD" id="84661"/>
<dbReference type="VEuPathDB" id="HostDB:ENSBTAG00000009246"/>
<dbReference type="VGNC" id="VGNC:50608">
    <property type="gene designation" value="DPY30"/>
</dbReference>
<dbReference type="eggNOG" id="KOG4109">
    <property type="taxonomic scope" value="Eukaryota"/>
</dbReference>
<dbReference type="GeneTree" id="ENSGT00390000008808"/>
<dbReference type="HOGENOM" id="CLU_135823_3_1_1"/>
<dbReference type="InParanoid" id="Q2NKU6"/>
<dbReference type="OMA" id="INYLAAY"/>
<dbReference type="OrthoDB" id="417678at2759"/>
<dbReference type="Proteomes" id="UP000009136">
    <property type="component" value="Chromosome 11"/>
</dbReference>
<dbReference type="Bgee" id="ENSBTAG00000009246">
    <property type="expression patterns" value="Expressed in oocyte and 104 other cell types or tissues"/>
</dbReference>
<dbReference type="GO" id="GO:0035097">
    <property type="term" value="C:histone methyltransferase complex"/>
    <property type="evidence" value="ECO:0000250"/>
    <property type="project" value="UniProtKB"/>
</dbReference>
<dbReference type="GO" id="GO:0071339">
    <property type="term" value="C:MLL1 complex"/>
    <property type="evidence" value="ECO:0007669"/>
    <property type="project" value="Ensembl"/>
</dbReference>
<dbReference type="GO" id="GO:0044666">
    <property type="term" value="C:MLL3/4 complex"/>
    <property type="evidence" value="ECO:0007669"/>
    <property type="project" value="Ensembl"/>
</dbReference>
<dbReference type="GO" id="GO:0005634">
    <property type="term" value="C:nucleus"/>
    <property type="evidence" value="ECO:0000250"/>
    <property type="project" value="UniProtKB"/>
</dbReference>
<dbReference type="GO" id="GO:0048188">
    <property type="term" value="C:Set1C/COMPASS complex"/>
    <property type="evidence" value="ECO:0000250"/>
    <property type="project" value="UniProtKB"/>
</dbReference>
<dbReference type="GO" id="GO:0005802">
    <property type="term" value="C:trans-Golgi network"/>
    <property type="evidence" value="ECO:0000250"/>
    <property type="project" value="UniProtKB"/>
</dbReference>
<dbReference type="GO" id="GO:0042803">
    <property type="term" value="F:protein homodimerization activity"/>
    <property type="evidence" value="ECO:0007669"/>
    <property type="project" value="Ensembl"/>
</dbReference>
<dbReference type="GO" id="GO:0016197">
    <property type="term" value="P:endosomal transport"/>
    <property type="evidence" value="ECO:0000250"/>
    <property type="project" value="UniProtKB"/>
</dbReference>
<dbReference type="GO" id="GO:0045815">
    <property type="term" value="P:transcription initiation-coupled chromatin remodeling"/>
    <property type="evidence" value="ECO:0000250"/>
    <property type="project" value="UniProtKB"/>
</dbReference>
<dbReference type="CDD" id="cd22965">
    <property type="entry name" value="DD_DPY30_SDC1"/>
    <property type="match status" value="1"/>
</dbReference>
<dbReference type="FunFam" id="1.20.890.10:FF:000003">
    <property type="entry name" value="protein dpy-30 homolog"/>
    <property type="match status" value="1"/>
</dbReference>
<dbReference type="Gene3D" id="1.20.890.10">
    <property type="entry name" value="cAMP-dependent protein kinase regulatory subunit, dimerization-anchoring domain"/>
    <property type="match status" value="1"/>
</dbReference>
<dbReference type="InterPro" id="IPR007858">
    <property type="entry name" value="Dpy-30_motif"/>
</dbReference>
<dbReference type="InterPro" id="IPR049629">
    <property type="entry name" value="DPY30_SDC1_DD"/>
</dbReference>
<dbReference type="InterPro" id="IPR037856">
    <property type="entry name" value="Sdc1/DPY30"/>
</dbReference>
<dbReference type="PANTHER" id="PTHR23356:SF16">
    <property type="entry name" value="DPY30 DOMAIN CONTAINING 2"/>
    <property type="match status" value="1"/>
</dbReference>
<dbReference type="PANTHER" id="PTHR23356">
    <property type="entry name" value="DPY30-RELATED"/>
    <property type="match status" value="1"/>
</dbReference>
<dbReference type="Pfam" id="PF05186">
    <property type="entry name" value="Dpy-30"/>
    <property type="match status" value="1"/>
</dbReference>
<comment type="function">
    <text evidence="1">As part of the MLL1/MLL complex, involved in the methylation of histone H3 at 'Lys-4', particularly trimethylation. Histone H3 'Lys-4' methylation represents a specific tag for epigenetic transcriptional activation. May play some role in histone H3 acetylation. In embryonic stem cells, may play a crucial role in retinoic acid-induced differentiation along the neural lineage, regulating gene induction and H3 'Lys-4' methylation at key developmental loci. May also play an indirect or direct role in endosomal transport (By similarity).</text>
</comment>
<comment type="subunit">
    <text evidence="1">Homodimer. Core component of several methyltransferase-containing complexes including MLL1/MLL, MLL2/3 (also named ASCOM complex) and MLL4/WBP7. Each complex is at least composed of ASH2L, RBBP5, WDR5, DPY30, one or more specific histone methyltransferases (KMT2A/MLL1, KMT2D/MLL2, KMT2C/MLL3 and KMT2B/MLL4), and the facultative components MEN1, HCFC1, HCFC2, NCOA6, KDM6A, PAXIP1/PTIP, PAGR1 and alpha- and beta-tubulin (By similarity). Interacts with ASH2L; the interaction is direct (By similarity). Interacts with ARFGEF1 (By similarity). Component of the SET1 complex, at least composed of the catalytic subunit (SETD1A or SETD1B), WDR5, WDR82, RBBP5, ASH2L/ASH2, CXXC1/CFP1, HCFC1 and DPY30 (By similarity).</text>
</comment>
<comment type="subcellular location">
    <subcellularLocation>
        <location evidence="1">Nucleus</location>
    </subcellularLocation>
    <subcellularLocation>
        <location evidence="1">Golgi apparatus</location>
        <location evidence="1">trans-Golgi network</location>
    </subcellularLocation>
</comment>
<comment type="similarity">
    <text evidence="4">Belongs to the dpy-30 family.</text>
</comment>
<accession>Q2NKU6</accession>
<reference key="1">
    <citation type="submission" date="2006-01" db="EMBL/GenBank/DDBJ databases">
        <authorList>
            <consortium name="NIH - Mammalian Gene Collection (MGC) project"/>
        </authorList>
    </citation>
    <scope>NUCLEOTIDE SEQUENCE [LARGE SCALE MRNA]</scope>
    <source>
        <strain>Hereford</strain>
        <tissue>Hypothalamus</tissue>
    </source>
</reference>
<sequence length="99" mass="11250">MEPEQMLEGQTQVAENPHSEYGLTDNVERIVENEKINAEKSSKQKVDLQSLPTRAYLDQTVVPILLQGLAVLAKERPPNPIEFLASYLLKNKAQFEDRN</sequence>
<keyword id="KW-0007">Acetylation</keyword>
<keyword id="KW-0156">Chromatin regulator</keyword>
<keyword id="KW-0333">Golgi apparatus</keyword>
<keyword id="KW-1017">Isopeptide bond</keyword>
<keyword id="KW-0539">Nucleus</keyword>
<keyword id="KW-0597">Phosphoprotein</keyword>
<keyword id="KW-1185">Reference proteome</keyword>
<keyword id="KW-0804">Transcription</keyword>
<keyword id="KW-0805">Transcription regulation</keyword>
<keyword id="KW-0832">Ubl conjugation</keyword>
<name>DPY30_BOVIN</name>